<evidence type="ECO:0000250" key="1">
    <source>
        <dbReference type="UniProtKB" id="E2AXC7"/>
    </source>
</evidence>
<evidence type="ECO:0000250" key="2">
    <source>
        <dbReference type="UniProtKB" id="P46736"/>
    </source>
</evidence>
<evidence type="ECO:0000250" key="3">
    <source>
        <dbReference type="UniProtKB" id="P46737"/>
    </source>
</evidence>
<evidence type="ECO:0000255" key="4">
    <source>
        <dbReference type="PROSITE-ProRule" id="PRU01182"/>
    </source>
</evidence>
<evidence type="ECO:0000305" key="5"/>
<accession>Q5R9L6</accession>
<feature type="initiator methionine" description="Removed" evidence="2">
    <location>
        <position position="1"/>
    </location>
</feature>
<feature type="chain" id="PRO_0000373947" description="Lys-63-specific deubiquitinase BRCC36">
    <location>
        <begin position="2"/>
        <end position="247"/>
    </location>
</feature>
<feature type="domain" description="MPN" evidence="4">
    <location>
        <begin position="12"/>
        <end position="179"/>
    </location>
</feature>
<feature type="short sequence motif" description="JAMM motif" evidence="4">
    <location>
        <begin position="122"/>
        <end position="135"/>
    </location>
</feature>
<feature type="binding site" evidence="4">
    <location>
        <position position="122"/>
    </location>
    <ligand>
        <name>Zn(2+)</name>
        <dbReference type="ChEBI" id="CHEBI:29105"/>
        <note>catalytic</note>
    </ligand>
</feature>
<feature type="binding site" evidence="4">
    <location>
        <position position="124"/>
    </location>
    <ligand>
        <name>Zn(2+)</name>
        <dbReference type="ChEBI" id="CHEBI:29105"/>
        <note>catalytic</note>
    </ligand>
</feature>
<feature type="binding site" evidence="4">
    <location>
        <position position="135"/>
    </location>
    <ligand>
        <name>Zn(2+)</name>
        <dbReference type="ChEBI" id="CHEBI:29105"/>
        <note>catalytic</note>
    </ligand>
</feature>
<feature type="modified residue" description="N-acetylalanine" evidence="2">
    <location>
        <position position="2"/>
    </location>
</feature>
<feature type="modified residue" description="Phosphoserine" evidence="2">
    <location>
        <position position="189"/>
    </location>
</feature>
<dbReference type="EC" id="3.4.19.-" evidence="2"/>
<dbReference type="EMBL" id="CR859371">
    <property type="protein sequence ID" value="CAH91544.1"/>
    <property type="molecule type" value="mRNA"/>
</dbReference>
<dbReference type="RefSeq" id="NP_001125907.1">
    <property type="nucleotide sequence ID" value="NM_001132435.1"/>
</dbReference>
<dbReference type="SMR" id="Q5R9L6"/>
<dbReference type="STRING" id="9601.ENSPPYP00000023399"/>
<dbReference type="MEROPS" id="M67.004"/>
<dbReference type="Ensembl" id="ENSPPYT00000046383.1">
    <property type="protein sequence ID" value="ENSPPYP00000025231.1"/>
    <property type="gene ID" value="ENSPPYG00000020899.3"/>
</dbReference>
<dbReference type="GeneID" id="100172840"/>
<dbReference type="KEGG" id="pon:100172840"/>
<dbReference type="CTD" id="79184"/>
<dbReference type="eggNOG" id="KOG1555">
    <property type="taxonomic scope" value="Eukaryota"/>
</dbReference>
<dbReference type="GeneTree" id="ENSGT00390000000360"/>
<dbReference type="InParanoid" id="Q5R9L6"/>
<dbReference type="OrthoDB" id="446074at2759"/>
<dbReference type="Proteomes" id="UP000001595">
    <property type="component" value="Chromosome X"/>
</dbReference>
<dbReference type="GO" id="GO:0070531">
    <property type="term" value="C:BRCA1-A complex"/>
    <property type="evidence" value="ECO:0000250"/>
    <property type="project" value="UniProtKB"/>
</dbReference>
<dbReference type="GO" id="GO:0070552">
    <property type="term" value="C:BRISC complex"/>
    <property type="evidence" value="ECO:0000250"/>
    <property type="project" value="UniProtKB"/>
</dbReference>
<dbReference type="GO" id="GO:0005737">
    <property type="term" value="C:cytoplasm"/>
    <property type="evidence" value="ECO:0007669"/>
    <property type="project" value="UniProtKB-SubCell"/>
</dbReference>
<dbReference type="GO" id="GO:0005634">
    <property type="term" value="C:nucleus"/>
    <property type="evidence" value="ECO:0000250"/>
    <property type="project" value="UniProtKB"/>
</dbReference>
<dbReference type="GO" id="GO:0000922">
    <property type="term" value="C:spindle pole"/>
    <property type="evidence" value="ECO:0007669"/>
    <property type="project" value="UniProtKB-SubCell"/>
</dbReference>
<dbReference type="GO" id="GO:0004843">
    <property type="term" value="F:cysteine-type deubiquitinase activity"/>
    <property type="evidence" value="ECO:0007669"/>
    <property type="project" value="InterPro"/>
</dbReference>
<dbReference type="GO" id="GO:0046872">
    <property type="term" value="F:metal ion binding"/>
    <property type="evidence" value="ECO:0007669"/>
    <property type="project" value="UniProtKB-KW"/>
</dbReference>
<dbReference type="GO" id="GO:0140492">
    <property type="term" value="F:metal-dependent deubiquitinase activity"/>
    <property type="evidence" value="ECO:0000250"/>
    <property type="project" value="UniProtKB"/>
</dbReference>
<dbReference type="GO" id="GO:0008237">
    <property type="term" value="F:metallopeptidase activity"/>
    <property type="evidence" value="ECO:0000250"/>
    <property type="project" value="UniProtKB"/>
</dbReference>
<dbReference type="GO" id="GO:0031593">
    <property type="term" value="F:polyubiquitin modification-dependent protein binding"/>
    <property type="evidence" value="ECO:0000250"/>
    <property type="project" value="UniProtKB"/>
</dbReference>
<dbReference type="GO" id="GO:0051301">
    <property type="term" value="P:cell division"/>
    <property type="evidence" value="ECO:0007669"/>
    <property type="project" value="UniProtKB-KW"/>
</dbReference>
<dbReference type="GO" id="GO:0006338">
    <property type="term" value="P:chromatin remodeling"/>
    <property type="evidence" value="ECO:0000250"/>
    <property type="project" value="UniProtKB"/>
</dbReference>
<dbReference type="GO" id="GO:0140861">
    <property type="term" value="P:DNA repair-dependent chromatin remodeling"/>
    <property type="evidence" value="ECO:0000250"/>
    <property type="project" value="UniProtKB"/>
</dbReference>
<dbReference type="GO" id="GO:0006302">
    <property type="term" value="P:double-strand break repair"/>
    <property type="evidence" value="ECO:0000250"/>
    <property type="project" value="UniProtKB"/>
</dbReference>
<dbReference type="GO" id="GO:0007095">
    <property type="term" value="P:mitotic G2 DNA damage checkpoint signaling"/>
    <property type="evidence" value="ECO:0000250"/>
    <property type="project" value="UniProtKB"/>
</dbReference>
<dbReference type="GO" id="GO:0045739">
    <property type="term" value="P:positive regulation of DNA repair"/>
    <property type="evidence" value="ECO:0000250"/>
    <property type="project" value="UniProtKB"/>
</dbReference>
<dbReference type="GO" id="GO:1900227">
    <property type="term" value="P:positive regulation of NLRP3 inflammasome complex assembly"/>
    <property type="evidence" value="ECO:0000250"/>
    <property type="project" value="UniProtKB"/>
</dbReference>
<dbReference type="GO" id="GO:0070536">
    <property type="term" value="P:protein K63-linked deubiquitination"/>
    <property type="evidence" value="ECO:0000250"/>
    <property type="project" value="UniProtKB"/>
</dbReference>
<dbReference type="GO" id="GO:0006508">
    <property type="term" value="P:proteolysis"/>
    <property type="evidence" value="ECO:0007669"/>
    <property type="project" value="UniProtKB-KW"/>
</dbReference>
<dbReference type="GO" id="GO:0010212">
    <property type="term" value="P:response to ionizing radiation"/>
    <property type="evidence" value="ECO:0000250"/>
    <property type="project" value="UniProtKB"/>
</dbReference>
<dbReference type="CDD" id="cd08068">
    <property type="entry name" value="MPN_BRCC36"/>
    <property type="match status" value="1"/>
</dbReference>
<dbReference type="FunFam" id="3.40.140.10:FF:000015">
    <property type="entry name" value="Lys-63-specific deubiquitinase BRCC36 isoform 3"/>
    <property type="match status" value="1"/>
</dbReference>
<dbReference type="Gene3D" id="3.40.140.10">
    <property type="entry name" value="Cytidine Deaminase, domain 2"/>
    <property type="match status" value="1"/>
</dbReference>
<dbReference type="InterPro" id="IPR040749">
    <property type="entry name" value="BRCC36_C"/>
</dbReference>
<dbReference type="InterPro" id="IPR000555">
    <property type="entry name" value="JAMM/MPN+_dom"/>
</dbReference>
<dbReference type="InterPro" id="IPR050242">
    <property type="entry name" value="JAMM_MPN+_peptidase_M67A"/>
</dbReference>
<dbReference type="InterPro" id="IPR037518">
    <property type="entry name" value="MPN"/>
</dbReference>
<dbReference type="InterPro" id="IPR033860">
    <property type="entry name" value="MPN_BRCC36"/>
</dbReference>
<dbReference type="PANTHER" id="PTHR10410">
    <property type="entry name" value="EUKARYOTIC TRANSLATION INITIATION FACTOR 3 -RELATED"/>
    <property type="match status" value="1"/>
</dbReference>
<dbReference type="Pfam" id="PF18110">
    <property type="entry name" value="BRCC36_C"/>
    <property type="match status" value="1"/>
</dbReference>
<dbReference type="Pfam" id="PF01398">
    <property type="entry name" value="JAB"/>
    <property type="match status" value="1"/>
</dbReference>
<dbReference type="SMART" id="SM00232">
    <property type="entry name" value="JAB_MPN"/>
    <property type="match status" value="1"/>
</dbReference>
<dbReference type="SUPFAM" id="SSF102712">
    <property type="entry name" value="JAB1/MPN domain"/>
    <property type="match status" value="1"/>
</dbReference>
<dbReference type="PROSITE" id="PS50249">
    <property type="entry name" value="MPN"/>
    <property type="match status" value="1"/>
</dbReference>
<name>BRCC3_PONAB</name>
<reference key="1">
    <citation type="submission" date="2004-11" db="EMBL/GenBank/DDBJ databases">
        <authorList>
            <consortium name="The German cDNA consortium"/>
        </authorList>
    </citation>
    <scope>NUCLEOTIDE SEQUENCE [LARGE SCALE MRNA]</scope>
    <source>
        <tissue>Brain cortex</tissue>
    </source>
</reference>
<comment type="function">
    <text evidence="2 3">Metalloprotease that specifically cleaves 'Lys-63'-linked polyubiquitin chains. Does not have activity toward 'Lys-48'-linked polyubiquitin chains. Component of the BRCA1-A complex, a complex that specifically recognizes 'Lys-63'-linked ubiquitinated histones H2A and H2AX at DNA lesions sites, leading to target the BRCA1-BARD1 heterodimer to sites of DNA damage at double-strand breaks (DSBs). In the BRCA1-A complex, it specifically removes 'Lys-63'-linked ubiquitin on histones H2A and H2AX, antagonizing the RNF8-dependent ubiquitination at double-strand breaks (DSBs). Catalytic subunit of the BRISC complex, a multiprotein complex that specifically cleaves 'Lys-63'-linked ubiquitin in various substrates. Mediates the specific 'Lys-63'-specific deubiquitination associated with the COP9 signalosome complex (CSN), via the interaction of the BRISC complex with the CSN complex. The BRISC complex is required for normal mitotic spindle assembly and microtubule attachment to kinetochores via its role in deubiquitinating NUMA1. Plays a role in interferon signaling via its role in the deubiquitination of the interferon receptor IFNAR1; deubiquitination increases IFNAR1 activity by enhancing its stability and cell surface expression (By similarity). Acts as a regulator of the NLRP3 inflammasome by mediating deubiquitination of NLRP3, leading to NLRP3 inflammasome assembly (By similarity). Down-regulates the response to bacterial lipopolysaccharide (LPS) via its role in IFNAR1 deubiquitination (By similarity). Deubiquitinates HDAC1 and PWWP2B leading to their stabilization (By similarity).</text>
</comment>
<comment type="cofactor">
    <cofactor evidence="1 2">
        <name>Zn(2+)</name>
        <dbReference type="ChEBI" id="CHEBI:29105"/>
    </cofactor>
    <text evidence="1">Binds 1 zinc ion per subunit.</text>
</comment>
<comment type="subunit">
    <text evidence="2 3">Component of the ARISC complex, at least composed of UIMC1/RAP80, ABRAXAS1, BRCC3/BRCC36, BABAM2 and BABAM1/NBA1. Component of the BRCA1-A complex, at least composed of BRCA1, BARD1, UIMC1/RAP80, ABRAXAS1, BRCC3/BRCC36, BABAM2 and BABAM1/NBA1. In the BRCA1-A complex, interacts directly with ABRAXAS1 and BABAM2. Component of the BRISC complex, at least composed of ABRAXAS2, BRCC3/BRCC36, BABAM2 and BABAM1/NBA1. Identified in a complex with SHMT2 and the other subunits of the BRISC complex. In the BRISC complex, interacts directly with ABRAXAS2. Identified in a complex with ABRAXAS2 and NUMA1. The BRISC complex interacts with the CSN complex. Component of the BRCA1/BRCA2 containing complex (BRCC), which also contains BRCA1, BRCA2, BARD1, BABAM2 and RAD51. BRCC is a ubiquitin E3 ligase complex that enhances cellular survival following DNA damage. Interacts with BRCA1. Binds polyubiquitin (By similarity). Interacts with PWWP2B (By similarity). Interacts with HDAC1; this interaction is enhanced in the presence of PWWP2B (By similarity).</text>
</comment>
<comment type="subcellular location">
    <subcellularLocation>
        <location evidence="2">Nucleus</location>
    </subcellularLocation>
    <subcellularLocation>
        <location evidence="2">Cytoplasm</location>
    </subcellularLocation>
    <subcellularLocation>
        <location evidence="2">Cytoplasm</location>
        <location evidence="2">Cytoskeleton</location>
        <location evidence="2">Spindle pole</location>
    </subcellularLocation>
    <text evidence="2">Localizes at sites of DNA damage at double-strand breaks (DSBs). Interaction with ABRAXAS2 retains BRCC3 in the cytoplasm.</text>
</comment>
<comment type="similarity">
    <text evidence="5">Belongs to the peptidase M67A family. BRCC36 subfamily.</text>
</comment>
<sequence>MAVQVVQAVQAVHLESDAFLVCLNHALSTEKEEVMGLCIGELNDDTRSDSKFAYTGTEMRTVAEKVDAVRIVHIHSVIILRRSDKRKDRVEISPEQLSAASTEAERLAELTGRPMRVVGWYHSHPHITVWPSHVDVRTQAMYQMMDQGFVGLIFSCFIEDKNTKTGRVLYTCFQSIQAQKSSDLTHLDSVTKIHNGSVFTKNLCSQMSAVSGPLLQWLEDRLEQNQQHLQELQQEKEELMQELSSLE</sequence>
<proteinExistence type="evidence at transcript level"/>
<protein>
    <recommendedName>
        <fullName>Lys-63-specific deubiquitinase BRCC36</fullName>
        <ecNumber evidence="2">3.4.19.-</ecNumber>
    </recommendedName>
    <alternativeName>
        <fullName>BRCA1-A complex subunit BRCC36</fullName>
    </alternativeName>
    <alternativeName>
        <fullName>BRCA1/BRCA2-containing complex subunit 3</fullName>
    </alternativeName>
    <alternativeName>
        <fullName>BRCA1/BRCA2-containing complex subunit 36</fullName>
    </alternativeName>
    <alternativeName>
        <fullName>BRISC complex subunit BRCC36</fullName>
    </alternativeName>
</protein>
<organism>
    <name type="scientific">Pongo abelii</name>
    <name type="common">Sumatran orangutan</name>
    <name type="synonym">Pongo pygmaeus abelii</name>
    <dbReference type="NCBI Taxonomy" id="9601"/>
    <lineage>
        <taxon>Eukaryota</taxon>
        <taxon>Metazoa</taxon>
        <taxon>Chordata</taxon>
        <taxon>Craniata</taxon>
        <taxon>Vertebrata</taxon>
        <taxon>Euteleostomi</taxon>
        <taxon>Mammalia</taxon>
        <taxon>Eutheria</taxon>
        <taxon>Euarchontoglires</taxon>
        <taxon>Primates</taxon>
        <taxon>Haplorrhini</taxon>
        <taxon>Catarrhini</taxon>
        <taxon>Hominidae</taxon>
        <taxon>Pongo</taxon>
    </lineage>
</organism>
<keyword id="KW-0007">Acetylation</keyword>
<keyword id="KW-0131">Cell cycle</keyword>
<keyword id="KW-0132">Cell division</keyword>
<keyword id="KW-0156">Chromatin regulator</keyword>
<keyword id="KW-0963">Cytoplasm</keyword>
<keyword id="KW-0206">Cytoskeleton</keyword>
<keyword id="KW-0227">DNA damage</keyword>
<keyword id="KW-0234">DNA repair</keyword>
<keyword id="KW-0378">Hydrolase</keyword>
<keyword id="KW-0479">Metal-binding</keyword>
<keyword id="KW-0482">Metalloprotease</keyword>
<keyword id="KW-0498">Mitosis</keyword>
<keyword id="KW-0539">Nucleus</keyword>
<keyword id="KW-0597">Phosphoprotein</keyword>
<keyword id="KW-0645">Protease</keyword>
<keyword id="KW-1185">Reference proteome</keyword>
<keyword id="KW-0833">Ubl conjugation pathway</keyword>
<keyword id="KW-0862">Zinc</keyword>
<gene>
    <name type="primary">BRCC3</name>
    <name type="synonym">BRCC36</name>
</gene>